<sequence length="160" mass="17754">MAPALWRACNGLMAAFFALAALVQVNDPDAEVWVVVYTIPAVLTLLVGLNPEVTGNVIWKSISAIHILFCTVWAVGLASYLLHRTQQNILHEEEGRELSGLVIITAWIILCHSSSKNPVGGRIQLAIAIVITLFPFISWVYIYINKEMRSSWPTHCKTVI</sequence>
<feature type="chain" id="PRO_0000319424" description="Transmembrane protein 220">
    <location>
        <begin position="1"/>
        <end position="160"/>
    </location>
</feature>
<feature type="transmembrane region" description="Helical" evidence="1">
    <location>
        <begin position="3"/>
        <end position="23"/>
    </location>
</feature>
<feature type="transmembrane region" description="Helical" evidence="1">
    <location>
        <begin position="30"/>
        <end position="50"/>
    </location>
</feature>
<feature type="transmembrane region" description="Helical" evidence="1">
    <location>
        <begin position="62"/>
        <end position="82"/>
    </location>
</feature>
<feature type="transmembrane region" description="Helical" evidence="1">
    <location>
        <begin position="100"/>
        <end position="120"/>
    </location>
</feature>
<feature type="transmembrane region" description="Helical" evidence="1">
    <location>
        <begin position="125"/>
        <end position="145"/>
    </location>
</feature>
<feature type="splice variant" id="VSP_031477" description="In isoform 2." evidence="2 3">
    <location>
        <begin position="25"/>
        <end position="34"/>
    </location>
</feature>
<comment type="interaction">
    <interactant intactId="EBI-17963211">
        <id>Q6QAJ8</id>
    </interactant>
    <interactant intactId="EBI-17775622">
        <id>Q96PB8</id>
        <label>LRRC3B</label>
    </interactant>
    <organismsDiffer>false</organismsDiffer>
    <experiments>3</experiments>
</comment>
<comment type="interaction">
    <interactant intactId="EBI-17963211">
        <id>Q6QAJ8</id>
    </interactant>
    <interactant intactId="EBI-8638294">
        <id>Q9NUH8</id>
        <label>TMEM14B</label>
    </interactant>
    <organismsDiffer>false</organismsDiffer>
    <experiments>3</experiments>
</comment>
<comment type="subcellular location">
    <subcellularLocation>
        <location evidence="4">Membrane</location>
        <topology evidence="4">Multi-pass membrane protein</topology>
    </subcellularLocation>
</comment>
<comment type="alternative products">
    <event type="alternative splicing"/>
    <isoform>
        <id>Q6QAJ8-1</id>
        <name>1</name>
        <sequence type="displayed"/>
    </isoform>
    <isoform>
        <id>Q6QAJ8-2</id>
        <name>2</name>
        <sequence type="described" ref="VSP_031477"/>
    </isoform>
</comment>
<dbReference type="EMBL" id="AY550194">
    <property type="protein sequence ID" value="AAS57719.1"/>
    <property type="molecule type" value="mRNA"/>
</dbReference>
<dbReference type="EMBL" id="EF126147">
    <property type="protein sequence ID" value="ABL75442.1"/>
    <property type="molecule type" value="mRNA"/>
</dbReference>
<dbReference type="EMBL" id="AK289624">
    <property type="protein sequence ID" value="BAF82313.1"/>
    <property type="molecule type" value="mRNA"/>
</dbReference>
<dbReference type="EMBL" id="AK295928">
    <property type="protein sequence ID" value="BAG58714.1"/>
    <property type="molecule type" value="mRNA"/>
</dbReference>
<dbReference type="EMBL" id="CH471108">
    <property type="protein sequence ID" value="EAW89993.1"/>
    <property type="molecule type" value="Genomic_DNA"/>
</dbReference>
<dbReference type="EMBL" id="BC127705">
    <property type="protein sequence ID" value="AAI27706.1"/>
    <property type="molecule type" value="mRNA"/>
</dbReference>
<dbReference type="EMBL" id="BC136838">
    <property type="protein sequence ID" value="AAI36839.1"/>
    <property type="molecule type" value="mRNA"/>
</dbReference>
<dbReference type="EMBL" id="BC136840">
    <property type="protein sequence ID" value="AAI36841.1"/>
    <property type="molecule type" value="mRNA"/>
</dbReference>
<dbReference type="CCDS" id="CCDS32567.1">
    <molecule id="Q6QAJ8-1"/>
</dbReference>
<dbReference type="CCDS" id="CCDS82075.1">
    <molecule id="Q6QAJ8-2"/>
</dbReference>
<dbReference type="RefSeq" id="NP_001004313.1">
    <molecule id="Q6QAJ8-1"/>
    <property type="nucleotide sequence ID" value="NM_001004313.3"/>
</dbReference>
<dbReference type="RefSeq" id="NP_001317068.1">
    <molecule id="Q6QAJ8-2"/>
    <property type="nucleotide sequence ID" value="NM_001330139.3"/>
</dbReference>
<dbReference type="RefSeq" id="NP_001317069.1">
    <property type="nucleotide sequence ID" value="NM_001330140.1"/>
</dbReference>
<dbReference type="BioGRID" id="132647">
    <property type="interactions" value="12"/>
</dbReference>
<dbReference type="FunCoup" id="Q6QAJ8">
    <property type="interactions" value="16"/>
</dbReference>
<dbReference type="IntAct" id="Q6QAJ8">
    <property type="interactions" value="8"/>
</dbReference>
<dbReference type="STRING" id="9606.ENSP00000339830"/>
<dbReference type="BioMuta" id="TMEM220"/>
<dbReference type="DMDM" id="74710017"/>
<dbReference type="MassIVE" id="Q6QAJ8"/>
<dbReference type="PaxDb" id="9606-ENSP00000339830"/>
<dbReference type="PeptideAtlas" id="Q6QAJ8"/>
<dbReference type="ProteomicsDB" id="67281">
    <molecule id="Q6QAJ8-1"/>
</dbReference>
<dbReference type="ProteomicsDB" id="67282">
    <molecule id="Q6QAJ8-2"/>
</dbReference>
<dbReference type="Antibodypedia" id="62490">
    <property type="antibodies" value="9 antibodies from 5 providers"/>
</dbReference>
<dbReference type="DNASU" id="388335"/>
<dbReference type="Ensembl" id="ENST00000341871.8">
    <molecule id="Q6QAJ8-1"/>
    <property type="protein sequence ID" value="ENSP00000339830.4"/>
    <property type="gene ID" value="ENSG00000187824.9"/>
</dbReference>
<dbReference type="Ensembl" id="ENST00000455996.6">
    <molecule id="Q6QAJ8-2"/>
    <property type="protein sequence ID" value="ENSP00000396973.2"/>
    <property type="gene ID" value="ENSG00000187824.9"/>
</dbReference>
<dbReference type="GeneID" id="388335"/>
<dbReference type="KEGG" id="hsa:388335"/>
<dbReference type="MANE-Select" id="ENST00000341871.8">
    <property type="protein sequence ID" value="ENSP00000339830.4"/>
    <property type="RefSeq nucleotide sequence ID" value="NM_001004313.3"/>
    <property type="RefSeq protein sequence ID" value="NP_001004313.1"/>
</dbReference>
<dbReference type="UCSC" id="uc002gmx.4">
    <molecule id="Q6QAJ8-1"/>
    <property type="organism name" value="human"/>
</dbReference>
<dbReference type="AGR" id="HGNC:33757"/>
<dbReference type="CTD" id="388335"/>
<dbReference type="DisGeNET" id="388335"/>
<dbReference type="GeneCards" id="TMEM220"/>
<dbReference type="HGNC" id="HGNC:33757">
    <property type="gene designation" value="TMEM220"/>
</dbReference>
<dbReference type="HPA" id="ENSG00000187824">
    <property type="expression patterns" value="Tissue enhanced (liver)"/>
</dbReference>
<dbReference type="neXtProt" id="NX_Q6QAJ8"/>
<dbReference type="OpenTargets" id="ENSG00000187824"/>
<dbReference type="PharmGKB" id="PA162406587"/>
<dbReference type="VEuPathDB" id="HostDB:ENSG00000187824"/>
<dbReference type="eggNOG" id="ENOG502S0TU">
    <property type="taxonomic scope" value="Eukaryota"/>
</dbReference>
<dbReference type="GeneTree" id="ENSGT00390000009386"/>
<dbReference type="HOGENOM" id="CLU_135112_1_0_1"/>
<dbReference type="InParanoid" id="Q6QAJ8"/>
<dbReference type="OMA" id="WAPALWR"/>
<dbReference type="OrthoDB" id="9924288at2759"/>
<dbReference type="PAN-GO" id="Q6QAJ8">
    <property type="GO annotations" value="0 GO annotations based on evolutionary models"/>
</dbReference>
<dbReference type="PhylomeDB" id="Q6QAJ8"/>
<dbReference type="TreeFam" id="TF332092"/>
<dbReference type="PathwayCommons" id="Q6QAJ8"/>
<dbReference type="SignaLink" id="Q6QAJ8"/>
<dbReference type="BioGRID-ORCS" id="388335">
    <property type="hits" value="17 hits in 1154 CRISPR screens"/>
</dbReference>
<dbReference type="ChiTaRS" id="TMEM220">
    <property type="organism name" value="human"/>
</dbReference>
<dbReference type="GenomeRNAi" id="388335"/>
<dbReference type="Pharos" id="Q6QAJ8">
    <property type="development level" value="Tdark"/>
</dbReference>
<dbReference type="PRO" id="PR:Q6QAJ8"/>
<dbReference type="Proteomes" id="UP000005640">
    <property type="component" value="Chromosome 17"/>
</dbReference>
<dbReference type="RNAct" id="Q6QAJ8">
    <property type="molecule type" value="protein"/>
</dbReference>
<dbReference type="Bgee" id="ENSG00000187824">
    <property type="expression patterns" value="Expressed in right lobe of liver and 151 other cell types or tissues"/>
</dbReference>
<dbReference type="ExpressionAtlas" id="Q6QAJ8">
    <property type="expression patterns" value="baseline and differential"/>
</dbReference>
<dbReference type="GO" id="GO:0016020">
    <property type="term" value="C:membrane"/>
    <property type="evidence" value="ECO:0007669"/>
    <property type="project" value="UniProtKB-SubCell"/>
</dbReference>
<dbReference type="InterPro" id="IPR029377">
    <property type="entry name" value="TMEM220"/>
</dbReference>
<dbReference type="PANTHER" id="PTHR34262">
    <property type="entry name" value="TRANSMEMBRANE PROTEIN 220"/>
    <property type="match status" value="1"/>
</dbReference>
<dbReference type="PANTHER" id="PTHR34262:SF1">
    <property type="entry name" value="TRANSMEMBRANE PROTEIN 220"/>
    <property type="match status" value="1"/>
</dbReference>
<dbReference type="Pfam" id="PF15071">
    <property type="entry name" value="TMEM220"/>
    <property type="match status" value="1"/>
</dbReference>
<name>TM220_HUMAN</name>
<organism>
    <name type="scientific">Homo sapiens</name>
    <name type="common">Human</name>
    <dbReference type="NCBI Taxonomy" id="9606"/>
    <lineage>
        <taxon>Eukaryota</taxon>
        <taxon>Metazoa</taxon>
        <taxon>Chordata</taxon>
        <taxon>Craniata</taxon>
        <taxon>Vertebrata</taxon>
        <taxon>Euteleostomi</taxon>
        <taxon>Mammalia</taxon>
        <taxon>Eutheria</taxon>
        <taxon>Euarchontoglires</taxon>
        <taxon>Primates</taxon>
        <taxon>Haplorrhini</taxon>
        <taxon>Catarrhini</taxon>
        <taxon>Hominidae</taxon>
        <taxon>Homo</taxon>
    </lineage>
</organism>
<reference key="1">
    <citation type="submission" date="2004-02" db="EMBL/GenBank/DDBJ databases">
        <title>Homo sapiens mRNA similar to RIKEN cDNA A730055C05.</title>
        <authorList>
            <person name="Han Z."/>
            <person name="Hu X."/>
        </authorList>
    </citation>
    <scope>NUCLEOTIDE SEQUENCE [MRNA] (ISOFORM 1)</scope>
</reference>
<reference key="2">
    <citation type="submission" date="2006-11" db="EMBL/GenBank/DDBJ databases">
        <authorList>
            <person name="Yu Z."/>
            <person name="Zheng Z."/>
            <person name="Fu Y."/>
            <person name="Tang T."/>
        </authorList>
    </citation>
    <scope>NUCLEOTIDE SEQUENCE [MRNA] (ISOFORM 2)</scope>
</reference>
<reference key="3">
    <citation type="journal article" date="2004" name="Nat. Genet.">
        <title>Complete sequencing and characterization of 21,243 full-length human cDNAs.</title>
        <authorList>
            <person name="Ota T."/>
            <person name="Suzuki Y."/>
            <person name="Nishikawa T."/>
            <person name="Otsuki T."/>
            <person name="Sugiyama T."/>
            <person name="Irie R."/>
            <person name="Wakamatsu A."/>
            <person name="Hayashi K."/>
            <person name="Sato H."/>
            <person name="Nagai K."/>
            <person name="Kimura K."/>
            <person name="Makita H."/>
            <person name="Sekine M."/>
            <person name="Obayashi M."/>
            <person name="Nishi T."/>
            <person name="Shibahara T."/>
            <person name="Tanaka T."/>
            <person name="Ishii S."/>
            <person name="Yamamoto J."/>
            <person name="Saito K."/>
            <person name="Kawai Y."/>
            <person name="Isono Y."/>
            <person name="Nakamura Y."/>
            <person name="Nagahari K."/>
            <person name="Murakami K."/>
            <person name="Yasuda T."/>
            <person name="Iwayanagi T."/>
            <person name="Wagatsuma M."/>
            <person name="Shiratori A."/>
            <person name="Sudo H."/>
            <person name="Hosoiri T."/>
            <person name="Kaku Y."/>
            <person name="Kodaira H."/>
            <person name="Kondo H."/>
            <person name="Sugawara M."/>
            <person name="Takahashi M."/>
            <person name="Kanda K."/>
            <person name="Yokoi T."/>
            <person name="Furuya T."/>
            <person name="Kikkawa E."/>
            <person name="Omura Y."/>
            <person name="Abe K."/>
            <person name="Kamihara K."/>
            <person name="Katsuta N."/>
            <person name="Sato K."/>
            <person name="Tanikawa M."/>
            <person name="Yamazaki M."/>
            <person name="Ninomiya K."/>
            <person name="Ishibashi T."/>
            <person name="Yamashita H."/>
            <person name="Murakawa K."/>
            <person name="Fujimori K."/>
            <person name="Tanai H."/>
            <person name="Kimata M."/>
            <person name="Watanabe M."/>
            <person name="Hiraoka S."/>
            <person name="Chiba Y."/>
            <person name="Ishida S."/>
            <person name="Ono Y."/>
            <person name="Takiguchi S."/>
            <person name="Watanabe S."/>
            <person name="Yosida M."/>
            <person name="Hotuta T."/>
            <person name="Kusano J."/>
            <person name="Kanehori K."/>
            <person name="Takahashi-Fujii A."/>
            <person name="Hara H."/>
            <person name="Tanase T.-O."/>
            <person name="Nomura Y."/>
            <person name="Togiya S."/>
            <person name="Komai F."/>
            <person name="Hara R."/>
            <person name="Takeuchi K."/>
            <person name="Arita M."/>
            <person name="Imose N."/>
            <person name="Musashino K."/>
            <person name="Yuuki H."/>
            <person name="Oshima A."/>
            <person name="Sasaki N."/>
            <person name="Aotsuka S."/>
            <person name="Yoshikawa Y."/>
            <person name="Matsunawa H."/>
            <person name="Ichihara T."/>
            <person name="Shiohata N."/>
            <person name="Sano S."/>
            <person name="Moriya S."/>
            <person name="Momiyama H."/>
            <person name="Satoh N."/>
            <person name="Takami S."/>
            <person name="Terashima Y."/>
            <person name="Suzuki O."/>
            <person name="Nakagawa S."/>
            <person name="Senoh A."/>
            <person name="Mizoguchi H."/>
            <person name="Goto Y."/>
            <person name="Shimizu F."/>
            <person name="Wakebe H."/>
            <person name="Hishigaki H."/>
            <person name="Watanabe T."/>
            <person name="Sugiyama A."/>
            <person name="Takemoto M."/>
            <person name="Kawakami B."/>
            <person name="Yamazaki M."/>
            <person name="Watanabe K."/>
            <person name="Kumagai A."/>
            <person name="Itakura S."/>
            <person name="Fukuzumi Y."/>
            <person name="Fujimori Y."/>
            <person name="Komiyama M."/>
            <person name="Tashiro H."/>
            <person name="Tanigami A."/>
            <person name="Fujiwara T."/>
            <person name="Ono T."/>
            <person name="Yamada K."/>
            <person name="Fujii Y."/>
            <person name="Ozaki K."/>
            <person name="Hirao M."/>
            <person name="Ohmori Y."/>
            <person name="Kawabata A."/>
            <person name="Hikiji T."/>
            <person name="Kobatake N."/>
            <person name="Inagaki H."/>
            <person name="Ikema Y."/>
            <person name="Okamoto S."/>
            <person name="Okitani R."/>
            <person name="Kawakami T."/>
            <person name="Noguchi S."/>
            <person name="Itoh T."/>
            <person name="Shigeta K."/>
            <person name="Senba T."/>
            <person name="Matsumura K."/>
            <person name="Nakajima Y."/>
            <person name="Mizuno T."/>
            <person name="Morinaga M."/>
            <person name="Sasaki M."/>
            <person name="Togashi T."/>
            <person name="Oyama M."/>
            <person name="Hata H."/>
            <person name="Watanabe M."/>
            <person name="Komatsu T."/>
            <person name="Mizushima-Sugano J."/>
            <person name="Satoh T."/>
            <person name="Shirai Y."/>
            <person name="Takahashi Y."/>
            <person name="Nakagawa K."/>
            <person name="Okumura K."/>
            <person name="Nagase T."/>
            <person name="Nomura N."/>
            <person name="Kikuchi H."/>
            <person name="Masuho Y."/>
            <person name="Yamashita R."/>
            <person name="Nakai K."/>
            <person name="Yada T."/>
            <person name="Nakamura Y."/>
            <person name="Ohara O."/>
            <person name="Isogai T."/>
            <person name="Sugano S."/>
        </authorList>
    </citation>
    <scope>NUCLEOTIDE SEQUENCE [LARGE SCALE MRNA] (ISOFORMS 1 AND 2)</scope>
    <source>
        <tissue>Amygdala</tissue>
        <tissue>Substantia nigra</tissue>
    </source>
</reference>
<reference key="4">
    <citation type="submission" date="2005-09" db="EMBL/GenBank/DDBJ databases">
        <authorList>
            <person name="Mural R.J."/>
            <person name="Istrail S."/>
            <person name="Sutton G.G."/>
            <person name="Florea L."/>
            <person name="Halpern A.L."/>
            <person name="Mobarry C.M."/>
            <person name="Lippert R."/>
            <person name="Walenz B."/>
            <person name="Shatkay H."/>
            <person name="Dew I."/>
            <person name="Miller J.R."/>
            <person name="Flanigan M.J."/>
            <person name="Edwards N.J."/>
            <person name="Bolanos R."/>
            <person name="Fasulo D."/>
            <person name="Halldorsson B.V."/>
            <person name="Hannenhalli S."/>
            <person name="Turner R."/>
            <person name="Yooseph S."/>
            <person name="Lu F."/>
            <person name="Nusskern D.R."/>
            <person name="Shue B.C."/>
            <person name="Zheng X.H."/>
            <person name="Zhong F."/>
            <person name="Delcher A.L."/>
            <person name="Huson D.H."/>
            <person name="Kravitz S.A."/>
            <person name="Mouchard L."/>
            <person name="Reinert K."/>
            <person name="Remington K.A."/>
            <person name="Clark A.G."/>
            <person name="Waterman M.S."/>
            <person name="Eichler E.E."/>
            <person name="Adams M.D."/>
            <person name="Hunkapiller M.W."/>
            <person name="Myers E.W."/>
            <person name="Venter J.C."/>
        </authorList>
    </citation>
    <scope>NUCLEOTIDE SEQUENCE [LARGE SCALE GENOMIC DNA]</scope>
</reference>
<reference key="5">
    <citation type="journal article" date="2004" name="Genome Res.">
        <title>The status, quality, and expansion of the NIH full-length cDNA project: the Mammalian Gene Collection (MGC).</title>
        <authorList>
            <consortium name="The MGC Project Team"/>
        </authorList>
    </citation>
    <scope>NUCLEOTIDE SEQUENCE [LARGE SCALE MRNA] (ISOFORM 1)</scope>
    <source>
        <tissue>Brain</tissue>
        <tissue>Testis</tissue>
    </source>
</reference>
<protein>
    <recommendedName>
        <fullName>Transmembrane protein 220</fullName>
    </recommendedName>
</protein>
<gene>
    <name type="primary">TMEM220</name>
</gene>
<proteinExistence type="evidence at protein level"/>
<evidence type="ECO:0000255" key="1"/>
<evidence type="ECO:0000303" key="2">
    <source>
    </source>
</evidence>
<evidence type="ECO:0000303" key="3">
    <source ref="2"/>
</evidence>
<evidence type="ECO:0000305" key="4"/>
<accession>Q6QAJ8</accession>
<accession>A1YRJ4</accession>
<accession>B2RNE4</accession>
<accession>B4DJ52</accession>
<accession>B9EGW3</accession>
<keyword id="KW-0025">Alternative splicing</keyword>
<keyword id="KW-0472">Membrane</keyword>
<keyword id="KW-1267">Proteomics identification</keyword>
<keyword id="KW-1185">Reference proteome</keyword>
<keyword id="KW-0812">Transmembrane</keyword>
<keyword id="KW-1133">Transmembrane helix</keyword>